<organism>
    <name type="scientific">Glaesserella parasuis serovar 5 (strain SH0165)</name>
    <name type="common">Haemophilus parasuis</name>
    <dbReference type="NCBI Taxonomy" id="557723"/>
    <lineage>
        <taxon>Bacteria</taxon>
        <taxon>Pseudomonadati</taxon>
        <taxon>Pseudomonadota</taxon>
        <taxon>Gammaproteobacteria</taxon>
        <taxon>Pasteurellales</taxon>
        <taxon>Pasteurellaceae</taxon>
        <taxon>Glaesserella</taxon>
    </lineage>
</organism>
<feature type="chain" id="PRO_1000197657" description="Nucleoid-associated protein HAPS_1040">
    <location>
        <begin position="1"/>
        <end position="109"/>
    </location>
</feature>
<feature type="region of interest" description="Disordered" evidence="2">
    <location>
        <begin position="1"/>
        <end position="21"/>
    </location>
</feature>
<feature type="compositionally biased region" description="Low complexity" evidence="2">
    <location>
        <begin position="10"/>
        <end position="19"/>
    </location>
</feature>
<proteinExistence type="inferred from homology"/>
<sequence length="109" mass="11976">MFGKGGLGGLMKQAQQMQERMQKMQEEIAQLEVTGESGAGLVKVTINGAHNCRRIEIDPSLMEDDKEMAEDLVAAAFNDAVRRADEMQKEKMASVTAGMQLPPGMKFPF</sequence>
<gene>
    <name type="ordered locus">HAPS_1040</name>
</gene>
<keyword id="KW-0963">Cytoplasm</keyword>
<keyword id="KW-0238">DNA-binding</keyword>
<keyword id="KW-1185">Reference proteome</keyword>
<comment type="function">
    <text evidence="1">Binds to DNA and alters its conformation. May be involved in regulation of gene expression, nucleoid organization and DNA protection.</text>
</comment>
<comment type="subunit">
    <text evidence="1">Homodimer.</text>
</comment>
<comment type="subcellular location">
    <subcellularLocation>
        <location evidence="1">Cytoplasm</location>
        <location evidence="1">Nucleoid</location>
    </subcellularLocation>
</comment>
<comment type="similarity">
    <text evidence="1">Belongs to the YbaB/EbfC family.</text>
</comment>
<name>Y1040_GLAP5</name>
<accession>B8F5Q7</accession>
<protein>
    <recommendedName>
        <fullName evidence="1">Nucleoid-associated protein HAPS_1040</fullName>
    </recommendedName>
</protein>
<evidence type="ECO:0000255" key="1">
    <source>
        <dbReference type="HAMAP-Rule" id="MF_00274"/>
    </source>
</evidence>
<evidence type="ECO:0000256" key="2">
    <source>
        <dbReference type="SAM" id="MobiDB-lite"/>
    </source>
</evidence>
<reference key="1">
    <citation type="journal article" date="2009" name="J. Bacteriol.">
        <title>Complete genome sequence of Haemophilus parasuis SH0165.</title>
        <authorList>
            <person name="Yue M."/>
            <person name="Yang F."/>
            <person name="Yang J."/>
            <person name="Bei W."/>
            <person name="Cai X."/>
            <person name="Chen L."/>
            <person name="Dong J."/>
            <person name="Zhou R."/>
            <person name="Jin M."/>
            <person name="Jin Q."/>
            <person name="Chen H."/>
        </authorList>
    </citation>
    <scope>NUCLEOTIDE SEQUENCE [LARGE SCALE GENOMIC DNA]</scope>
    <source>
        <strain>SH0165</strain>
    </source>
</reference>
<dbReference type="EMBL" id="CP001321">
    <property type="protein sequence ID" value="ACL32659.1"/>
    <property type="molecule type" value="Genomic_DNA"/>
</dbReference>
<dbReference type="RefSeq" id="WP_015939587.1">
    <property type="nucleotide sequence ID" value="NC_011852.1"/>
</dbReference>
<dbReference type="SMR" id="B8F5Q7"/>
<dbReference type="STRING" id="557723.HAPS_1040"/>
<dbReference type="KEGG" id="hap:HAPS_1040"/>
<dbReference type="HOGENOM" id="CLU_140930_0_0_6"/>
<dbReference type="Proteomes" id="UP000006743">
    <property type="component" value="Chromosome"/>
</dbReference>
<dbReference type="GO" id="GO:0043590">
    <property type="term" value="C:bacterial nucleoid"/>
    <property type="evidence" value="ECO:0007669"/>
    <property type="project" value="UniProtKB-UniRule"/>
</dbReference>
<dbReference type="GO" id="GO:0005829">
    <property type="term" value="C:cytosol"/>
    <property type="evidence" value="ECO:0007669"/>
    <property type="project" value="TreeGrafter"/>
</dbReference>
<dbReference type="GO" id="GO:0003677">
    <property type="term" value="F:DNA binding"/>
    <property type="evidence" value="ECO:0007669"/>
    <property type="project" value="UniProtKB-UniRule"/>
</dbReference>
<dbReference type="FunFam" id="3.30.1310.10:FF:000001">
    <property type="entry name" value="Nucleoid-associated protein YbaB"/>
    <property type="match status" value="1"/>
</dbReference>
<dbReference type="Gene3D" id="3.30.1310.10">
    <property type="entry name" value="Nucleoid-associated protein YbaB-like domain"/>
    <property type="match status" value="1"/>
</dbReference>
<dbReference type="HAMAP" id="MF_00274">
    <property type="entry name" value="DNA_YbaB_EbfC"/>
    <property type="match status" value="1"/>
</dbReference>
<dbReference type="InterPro" id="IPR036894">
    <property type="entry name" value="YbaB-like_sf"/>
</dbReference>
<dbReference type="InterPro" id="IPR004401">
    <property type="entry name" value="YbaB/EbfC"/>
</dbReference>
<dbReference type="NCBIfam" id="TIGR00103">
    <property type="entry name" value="DNA_YbaB_EbfC"/>
    <property type="match status" value="1"/>
</dbReference>
<dbReference type="PANTHER" id="PTHR33449">
    <property type="entry name" value="NUCLEOID-ASSOCIATED PROTEIN YBAB"/>
    <property type="match status" value="1"/>
</dbReference>
<dbReference type="PANTHER" id="PTHR33449:SF1">
    <property type="entry name" value="NUCLEOID-ASSOCIATED PROTEIN YBAB"/>
    <property type="match status" value="1"/>
</dbReference>
<dbReference type="Pfam" id="PF02575">
    <property type="entry name" value="YbaB_DNA_bd"/>
    <property type="match status" value="1"/>
</dbReference>
<dbReference type="PIRSF" id="PIRSF004555">
    <property type="entry name" value="UCP004555"/>
    <property type="match status" value="1"/>
</dbReference>
<dbReference type="SUPFAM" id="SSF82607">
    <property type="entry name" value="YbaB-like"/>
    <property type="match status" value="1"/>
</dbReference>